<feature type="chain" id="PRO_0000083768" description="3-isopropylmalate dehydrogenase">
    <location>
        <begin position="1"/>
        <end position="357"/>
    </location>
</feature>
<feature type="binding site" evidence="1">
    <location>
        <position position="97"/>
    </location>
    <ligand>
        <name>substrate</name>
    </ligand>
</feature>
<feature type="binding site" evidence="1">
    <location>
        <position position="107"/>
    </location>
    <ligand>
        <name>substrate</name>
    </ligand>
</feature>
<feature type="binding site" evidence="1">
    <location>
        <position position="135"/>
    </location>
    <ligand>
        <name>substrate</name>
    </ligand>
</feature>
<feature type="binding site" evidence="1">
    <location>
        <position position="224"/>
    </location>
    <ligand>
        <name>Mg(2+)</name>
        <dbReference type="ChEBI" id="CHEBI:18420"/>
    </ligand>
</feature>
<feature type="binding site" evidence="1">
    <location>
        <position position="224"/>
    </location>
    <ligand>
        <name>substrate</name>
    </ligand>
</feature>
<feature type="binding site" evidence="1">
    <location>
        <position position="248"/>
    </location>
    <ligand>
        <name>Mg(2+)</name>
        <dbReference type="ChEBI" id="CHEBI:18420"/>
    </ligand>
</feature>
<feature type="binding site" evidence="1">
    <location>
        <position position="252"/>
    </location>
    <ligand>
        <name>Mg(2+)</name>
        <dbReference type="ChEBI" id="CHEBI:18420"/>
    </ligand>
</feature>
<feature type="binding site" evidence="1">
    <location>
        <begin position="282"/>
        <end position="294"/>
    </location>
    <ligand>
        <name>NAD(+)</name>
        <dbReference type="ChEBI" id="CHEBI:57540"/>
    </ligand>
</feature>
<feature type="site" description="Important for catalysis" evidence="1">
    <location>
        <position position="142"/>
    </location>
</feature>
<feature type="site" description="Important for catalysis" evidence="1">
    <location>
        <position position="192"/>
    </location>
</feature>
<gene>
    <name evidence="1" type="primary">leuB</name>
    <name type="ordered locus">SYNW0784</name>
</gene>
<evidence type="ECO:0000255" key="1">
    <source>
        <dbReference type="HAMAP-Rule" id="MF_01033"/>
    </source>
</evidence>
<dbReference type="EC" id="1.1.1.85" evidence="1"/>
<dbReference type="EMBL" id="BX569691">
    <property type="protein sequence ID" value="CAE07299.1"/>
    <property type="molecule type" value="Genomic_DNA"/>
</dbReference>
<dbReference type="RefSeq" id="WP_011127649.1">
    <property type="nucleotide sequence ID" value="NC_005070.1"/>
</dbReference>
<dbReference type="SMR" id="Q7U840"/>
<dbReference type="STRING" id="84588.SYNW0784"/>
<dbReference type="KEGG" id="syw:SYNW0784"/>
<dbReference type="eggNOG" id="COG0473">
    <property type="taxonomic scope" value="Bacteria"/>
</dbReference>
<dbReference type="HOGENOM" id="CLU_031953_0_3_3"/>
<dbReference type="UniPathway" id="UPA00048">
    <property type="reaction ID" value="UER00072"/>
</dbReference>
<dbReference type="Proteomes" id="UP000001422">
    <property type="component" value="Chromosome"/>
</dbReference>
<dbReference type="GO" id="GO:0005829">
    <property type="term" value="C:cytosol"/>
    <property type="evidence" value="ECO:0007669"/>
    <property type="project" value="TreeGrafter"/>
</dbReference>
<dbReference type="GO" id="GO:0003862">
    <property type="term" value="F:3-isopropylmalate dehydrogenase activity"/>
    <property type="evidence" value="ECO:0007669"/>
    <property type="project" value="UniProtKB-UniRule"/>
</dbReference>
<dbReference type="GO" id="GO:0000287">
    <property type="term" value="F:magnesium ion binding"/>
    <property type="evidence" value="ECO:0007669"/>
    <property type="project" value="InterPro"/>
</dbReference>
<dbReference type="GO" id="GO:0051287">
    <property type="term" value="F:NAD binding"/>
    <property type="evidence" value="ECO:0007669"/>
    <property type="project" value="InterPro"/>
</dbReference>
<dbReference type="GO" id="GO:0009098">
    <property type="term" value="P:L-leucine biosynthetic process"/>
    <property type="evidence" value="ECO:0007669"/>
    <property type="project" value="UniProtKB-UniRule"/>
</dbReference>
<dbReference type="FunFam" id="3.40.718.10:FF:000028">
    <property type="entry name" value="3-isopropylmalate dehydrogenase"/>
    <property type="match status" value="1"/>
</dbReference>
<dbReference type="Gene3D" id="3.40.718.10">
    <property type="entry name" value="Isopropylmalate Dehydrogenase"/>
    <property type="match status" value="1"/>
</dbReference>
<dbReference type="HAMAP" id="MF_01033">
    <property type="entry name" value="LeuB_type1"/>
    <property type="match status" value="1"/>
</dbReference>
<dbReference type="InterPro" id="IPR019818">
    <property type="entry name" value="IsoCit/isopropylmalate_DH_CS"/>
</dbReference>
<dbReference type="InterPro" id="IPR024084">
    <property type="entry name" value="IsoPropMal-DH-like_dom"/>
</dbReference>
<dbReference type="InterPro" id="IPR004429">
    <property type="entry name" value="Isopropylmalate_DH"/>
</dbReference>
<dbReference type="NCBIfam" id="TIGR00169">
    <property type="entry name" value="leuB"/>
    <property type="match status" value="1"/>
</dbReference>
<dbReference type="PANTHER" id="PTHR42979">
    <property type="entry name" value="3-ISOPROPYLMALATE DEHYDROGENASE"/>
    <property type="match status" value="1"/>
</dbReference>
<dbReference type="PANTHER" id="PTHR42979:SF1">
    <property type="entry name" value="3-ISOPROPYLMALATE DEHYDROGENASE"/>
    <property type="match status" value="1"/>
</dbReference>
<dbReference type="Pfam" id="PF00180">
    <property type="entry name" value="Iso_dh"/>
    <property type="match status" value="1"/>
</dbReference>
<dbReference type="SMART" id="SM01329">
    <property type="entry name" value="Iso_dh"/>
    <property type="match status" value="1"/>
</dbReference>
<dbReference type="SUPFAM" id="SSF53659">
    <property type="entry name" value="Isocitrate/Isopropylmalate dehydrogenase-like"/>
    <property type="match status" value="1"/>
</dbReference>
<dbReference type="PROSITE" id="PS00470">
    <property type="entry name" value="IDH_IMDH"/>
    <property type="match status" value="1"/>
</dbReference>
<proteinExistence type="inferred from homology"/>
<keyword id="KW-0028">Amino-acid biosynthesis</keyword>
<keyword id="KW-0100">Branched-chain amino acid biosynthesis</keyword>
<keyword id="KW-0963">Cytoplasm</keyword>
<keyword id="KW-0432">Leucine biosynthesis</keyword>
<keyword id="KW-0460">Magnesium</keyword>
<keyword id="KW-0464">Manganese</keyword>
<keyword id="KW-0479">Metal-binding</keyword>
<keyword id="KW-0520">NAD</keyword>
<keyword id="KW-0560">Oxidoreductase</keyword>
<name>LEU3_PARMW</name>
<accession>Q7U840</accession>
<comment type="function">
    <text evidence="1">Catalyzes the oxidation of 3-carboxy-2-hydroxy-4-methylpentanoate (3-isopropylmalate) to 3-carboxy-4-methyl-2-oxopentanoate. The product decarboxylates to 4-methyl-2 oxopentanoate.</text>
</comment>
<comment type="catalytic activity">
    <reaction evidence="1">
        <text>(2R,3S)-3-isopropylmalate + NAD(+) = 4-methyl-2-oxopentanoate + CO2 + NADH</text>
        <dbReference type="Rhea" id="RHEA:32271"/>
        <dbReference type="ChEBI" id="CHEBI:16526"/>
        <dbReference type="ChEBI" id="CHEBI:17865"/>
        <dbReference type="ChEBI" id="CHEBI:35121"/>
        <dbReference type="ChEBI" id="CHEBI:57540"/>
        <dbReference type="ChEBI" id="CHEBI:57945"/>
        <dbReference type="EC" id="1.1.1.85"/>
    </reaction>
</comment>
<comment type="cofactor">
    <cofactor evidence="1">
        <name>Mg(2+)</name>
        <dbReference type="ChEBI" id="CHEBI:18420"/>
    </cofactor>
    <cofactor evidence="1">
        <name>Mn(2+)</name>
        <dbReference type="ChEBI" id="CHEBI:29035"/>
    </cofactor>
    <text evidence="1">Binds 1 Mg(2+) or Mn(2+) ion per subunit.</text>
</comment>
<comment type="pathway">
    <text evidence="1">Amino-acid biosynthesis; L-leucine biosynthesis; L-leucine from 3-methyl-2-oxobutanoate: step 3/4.</text>
</comment>
<comment type="subunit">
    <text evidence="1">Homodimer.</text>
</comment>
<comment type="subcellular location">
    <subcellularLocation>
        <location evidence="1">Cytoplasm</location>
    </subcellularLocation>
</comment>
<comment type="similarity">
    <text evidence="1">Belongs to the isocitrate and isopropylmalate dehydrogenases family. LeuB type 1 subfamily.</text>
</comment>
<reference key="1">
    <citation type="journal article" date="2003" name="Nature">
        <title>The genome of a motile marine Synechococcus.</title>
        <authorList>
            <person name="Palenik B."/>
            <person name="Brahamsha B."/>
            <person name="Larimer F.W."/>
            <person name="Land M.L."/>
            <person name="Hauser L."/>
            <person name="Chain P."/>
            <person name="Lamerdin J.E."/>
            <person name="Regala W."/>
            <person name="Allen E.E."/>
            <person name="McCarren J."/>
            <person name="Paulsen I.T."/>
            <person name="Dufresne A."/>
            <person name="Partensky F."/>
            <person name="Webb E.A."/>
            <person name="Waterbury J."/>
        </authorList>
    </citation>
    <scope>NUCLEOTIDE SEQUENCE [LARGE SCALE GENOMIC DNA]</scope>
    <source>
        <strain>WH8102</strain>
    </source>
</reference>
<sequence>MAQHRVVLLPGDGIGPEITAVARQLLEAVSQRHGFELCFDGQLIGGSAIDACGEPLPASTLDACKAADAVLLAAIGSPRFDNLPRDKRPETGLLGLRSGMALFANLRPVKIVPALIGASSLRPEVIEGVDLMVVRELTGGIYFGQPKGRIQADGEERGFNTMTYSSSEVDRIARVAFDLARERRGNLCSVDKANVLDVSQLWRDRVDAMAPAYSDVEVSHMYVDNAAMQLVRSPRQFDVLLTGNLFGDILSDEAAMLTGSIGMLPSASLGSDCPGLFEPVHGSAPDIAGQDKANPMAMVLSAAMMLRIGLKQTEAAADLEAAVDKVLAAGFRTGDLMAEGCTALGCRAMGDALLKAL</sequence>
<protein>
    <recommendedName>
        <fullName evidence="1">3-isopropylmalate dehydrogenase</fullName>
        <ecNumber evidence="1">1.1.1.85</ecNumber>
    </recommendedName>
    <alternativeName>
        <fullName evidence="1">3-IPM-DH</fullName>
    </alternativeName>
    <alternativeName>
        <fullName evidence="1">Beta-IPM dehydrogenase</fullName>
        <shortName evidence="1">IMDH</shortName>
    </alternativeName>
</protein>
<organism>
    <name type="scientific">Parasynechococcus marenigrum (strain WH8102)</name>
    <dbReference type="NCBI Taxonomy" id="84588"/>
    <lineage>
        <taxon>Bacteria</taxon>
        <taxon>Bacillati</taxon>
        <taxon>Cyanobacteriota</taxon>
        <taxon>Cyanophyceae</taxon>
        <taxon>Synechococcales</taxon>
        <taxon>Prochlorococcaceae</taxon>
        <taxon>Parasynechococcus</taxon>
        <taxon>Parasynechococcus marenigrum</taxon>
    </lineage>
</organism>